<proteinExistence type="inferred from homology"/>
<organism>
    <name type="scientific">Bartonella tribocorum (strain CIP 105476 / IBS 506)</name>
    <dbReference type="NCBI Taxonomy" id="382640"/>
    <lineage>
        <taxon>Bacteria</taxon>
        <taxon>Pseudomonadati</taxon>
        <taxon>Pseudomonadota</taxon>
        <taxon>Alphaproteobacteria</taxon>
        <taxon>Hyphomicrobiales</taxon>
        <taxon>Bartonellaceae</taxon>
        <taxon>Bartonella</taxon>
    </lineage>
</organism>
<feature type="chain" id="PRO_0000332449" description="UDP-N-acetylenolpyruvoylglucosamine reductase">
    <location>
        <begin position="1"/>
        <end position="327"/>
    </location>
</feature>
<feature type="domain" description="FAD-binding PCMH-type" evidence="1">
    <location>
        <begin position="42"/>
        <end position="223"/>
    </location>
</feature>
<feature type="active site" evidence="1">
    <location>
        <position position="188"/>
    </location>
</feature>
<feature type="active site" description="Proton donor" evidence="1">
    <location>
        <position position="237"/>
    </location>
</feature>
<feature type="active site" evidence="1">
    <location>
        <position position="307"/>
    </location>
</feature>
<keyword id="KW-0131">Cell cycle</keyword>
<keyword id="KW-0132">Cell division</keyword>
<keyword id="KW-0133">Cell shape</keyword>
<keyword id="KW-0961">Cell wall biogenesis/degradation</keyword>
<keyword id="KW-0963">Cytoplasm</keyword>
<keyword id="KW-0274">FAD</keyword>
<keyword id="KW-0285">Flavoprotein</keyword>
<keyword id="KW-0521">NADP</keyword>
<keyword id="KW-0560">Oxidoreductase</keyword>
<keyword id="KW-0573">Peptidoglycan synthesis</keyword>
<protein>
    <recommendedName>
        <fullName evidence="1">UDP-N-acetylenolpyruvoylglucosamine reductase</fullName>
        <ecNumber evidence="1">1.3.1.98</ecNumber>
    </recommendedName>
    <alternativeName>
        <fullName evidence="1">UDP-N-acetylmuramate dehydrogenase</fullName>
    </alternativeName>
</protein>
<gene>
    <name evidence="1" type="primary">murB</name>
    <name type="ordered locus">BT_1589</name>
</gene>
<accession>A9IWA3</accession>
<name>MURB_BART1</name>
<comment type="function">
    <text evidence="1">Cell wall formation.</text>
</comment>
<comment type="catalytic activity">
    <reaction evidence="1">
        <text>UDP-N-acetyl-alpha-D-muramate + NADP(+) = UDP-N-acetyl-3-O-(1-carboxyvinyl)-alpha-D-glucosamine + NADPH + H(+)</text>
        <dbReference type="Rhea" id="RHEA:12248"/>
        <dbReference type="ChEBI" id="CHEBI:15378"/>
        <dbReference type="ChEBI" id="CHEBI:57783"/>
        <dbReference type="ChEBI" id="CHEBI:58349"/>
        <dbReference type="ChEBI" id="CHEBI:68483"/>
        <dbReference type="ChEBI" id="CHEBI:70757"/>
        <dbReference type="EC" id="1.3.1.98"/>
    </reaction>
</comment>
<comment type="cofactor">
    <cofactor evidence="1">
        <name>FAD</name>
        <dbReference type="ChEBI" id="CHEBI:57692"/>
    </cofactor>
</comment>
<comment type="pathway">
    <text evidence="1">Cell wall biogenesis; peptidoglycan biosynthesis.</text>
</comment>
<comment type="subcellular location">
    <subcellularLocation>
        <location evidence="1">Cytoplasm</location>
    </subcellularLocation>
</comment>
<comment type="similarity">
    <text evidence="1">Belongs to the MurB family.</text>
</comment>
<evidence type="ECO:0000255" key="1">
    <source>
        <dbReference type="HAMAP-Rule" id="MF_00037"/>
    </source>
</evidence>
<reference key="1">
    <citation type="journal article" date="2007" name="Nat. Genet.">
        <title>Genomic analysis of Bartonella identifies type IV secretion systems as host adaptability factors.</title>
        <authorList>
            <person name="Saenz H.L."/>
            <person name="Engel P."/>
            <person name="Stoeckli M.C."/>
            <person name="Lanz C."/>
            <person name="Raddatz G."/>
            <person name="Vayssier-Taussat M."/>
            <person name="Birtles R."/>
            <person name="Schuster S.C."/>
            <person name="Dehio C."/>
        </authorList>
    </citation>
    <scope>NUCLEOTIDE SEQUENCE [LARGE SCALE GENOMIC DNA]</scope>
    <source>
        <strain>CIP 105476 / IBS 506</strain>
    </source>
</reference>
<sequence length="327" mass="35669">MVMINFQHIDGEALLAQLQPLLGNIRGKLTPNVEMRKVTWFRTGGLAELFYQPVDEEDLALFLHNLPECVPVTIVGIGSNLLVRDGGVPGVVIRLSPKNFGQVQQVSSKGFLVGAGTADKHLAAAALKAEIAGFHFYHGIPGGLGGALKMNAGANGVETAARVVEVYALDRKGQRHILSLKDMHYSYRHCDIPEDFIFTAALLEGEPGNKDAIRAAMDEVALHRETVQPIREKTGGSTFKNPKDTSAWRVIDEAGCRGLQIGGAQMSEMHCNFMINTGQATGYDLEALGETVRARVFAHSAHLLQWEIERIGQFEQGRSVASFDPFH</sequence>
<dbReference type="EC" id="1.3.1.98" evidence="1"/>
<dbReference type="EMBL" id="AM260525">
    <property type="protein sequence ID" value="CAK01928.1"/>
    <property type="molecule type" value="Genomic_DNA"/>
</dbReference>
<dbReference type="SMR" id="A9IWA3"/>
<dbReference type="KEGG" id="btr:BT_1589"/>
<dbReference type="eggNOG" id="COG0812">
    <property type="taxonomic scope" value="Bacteria"/>
</dbReference>
<dbReference type="HOGENOM" id="CLU_035304_1_0_5"/>
<dbReference type="UniPathway" id="UPA00219"/>
<dbReference type="Proteomes" id="UP000001592">
    <property type="component" value="Chromosome"/>
</dbReference>
<dbReference type="GO" id="GO:0005829">
    <property type="term" value="C:cytosol"/>
    <property type="evidence" value="ECO:0007669"/>
    <property type="project" value="TreeGrafter"/>
</dbReference>
<dbReference type="GO" id="GO:0071949">
    <property type="term" value="F:FAD binding"/>
    <property type="evidence" value="ECO:0007669"/>
    <property type="project" value="InterPro"/>
</dbReference>
<dbReference type="GO" id="GO:0008762">
    <property type="term" value="F:UDP-N-acetylmuramate dehydrogenase activity"/>
    <property type="evidence" value="ECO:0007669"/>
    <property type="project" value="UniProtKB-UniRule"/>
</dbReference>
<dbReference type="GO" id="GO:0051301">
    <property type="term" value="P:cell division"/>
    <property type="evidence" value="ECO:0007669"/>
    <property type="project" value="UniProtKB-KW"/>
</dbReference>
<dbReference type="GO" id="GO:0071555">
    <property type="term" value="P:cell wall organization"/>
    <property type="evidence" value="ECO:0007669"/>
    <property type="project" value="UniProtKB-KW"/>
</dbReference>
<dbReference type="GO" id="GO:0009252">
    <property type="term" value="P:peptidoglycan biosynthetic process"/>
    <property type="evidence" value="ECO:0007669"/>
    <property type="project" value="UniProtKB-UniRule"/>
</dbReference>
<dbReference type="GO" id="GO:0008360">
    <property type="term" value="P:regulation of cell shape"/>
    <property type="evidence" value="ECO:0007669"/>
    <property type="project" value="UniProtKB-KW"/>
</dbReference>
<dbReference type="Gene3D" id="3.30.465.10">
    <property type="match status" value="1"/>
</dbReference>
<dbReference type="Gene3D" id="3.90.78.10">
    <property type="entry name" value="UDP-N-acetylenolpyruvoylglucosamine reductase, C-terminal domain"/>
    <property type="match status" value="1"/>
</dbReference>
<dbReference type="Gene3D" id="3.30.43.10">
    <property type="entry name" value="Uridine Diphospho-n-acetylenolpyruvylglucosamine Reductase, domain 2"/>
    <property type="match status" value="1"/>
</dbReference>
<dbReference type="HAMAP" id="MF_00037">
    <property type="entry name" value="MurB"/>
    <property type="match status" value="1"/>
</dbReference>
<dbReference type="InterPro" id="IPR016166">
    <property type="entry name" value="FAD-bd_PCMH"/>
</dbReference>
<dbReference type="InterPro" id="IPR036318">
    <property type="entry name" value="FAD-bd_PCMH-like_sf"/>
</dbReference>
<dbReference type="InterPro" id="IPR016167">
    <property type="entry name" value="FAD-bd_PCMH_sub1"/>
</dbReference>
<dbReference type="InterPro" id="IPR016169">
    <property type="entry name" value="FAD-bd_PCMH_sub2"/>
</dbReference>
<dbReference type="InterPro" id="IPR003170">
    <property type="entry name" value="MurB"/>
</dbReference>
<dbReference type="InterPro" id="IPR011601">
    <property type="entry name" value="MurB_C"/>
</dbReference>
<dbReference type="InterPro" id="IPR036635">
    <property type="entry name" value="MurB_C_sf"/>
</dbReference>
<dbReference type="InterPro" id="IPR006094">
    <property type="entry name" value="Oxid_FAD_bind_N"/>
</dbReference>
<dbReference type="NCBIfam" id="TIGR00179">
    <property type="entry name" value="murB"/>
    <property type="match status" value="1"/>
</dbReference>
<dbReference type="NCBIfam" id="NF010480">
    <property type="entry name" value="PRK13905.1"/>
    <property type="match status" value="1"/>
</dbReference>
<dbReference type="PANTHER" id="PTHR21071">
    <property type="entry name" value="UDP-N-ACETYLENOLPYRUVOYLGLUCOSAMINE REDUCTASE"/>
    <property type="match status" value="1"/>
</dbReference>
<dbReference type="PANTHER" id="PTHR21071:SF4">
    <property type="entry name" value="UDP-N-ACETYLENOLPYRUVOYLGLUCOSAMINE REDUCTASE"/>
    <property type="match status" value="1"/>
</dbReference>
<dbReference type="Pfam" id="PF01565">
    <property type="entry name" value="FAD_binding_4"/>
    <property type="match status" value="1"/>
</dbReference>
<dbReference type="Pfam" id="PF02873">
    <property type="entry name" value="MurB_C"/>
    <property type="match status" value="1"/>
</dbReference>
<dbReference type="SUPFAM" id="SSF56176">
    <property type="entry name" value="FAD-binding/transporter-associated domain-like"/>
    <property type="match status" value="1"/>
</dbReference>
<dbReference type="SUPFAM" id="SSF56194">
    <property type="entry name" value="Uridine diphospho-N-Acetylenolpyruvylglucosamine reductase, MurB, C-terminal domain"/>
    <property type="match status" value="1"/>
</dbReference>
<dbReference type="PROSITE" id="PS51387">
    <property type="entry name" value="FAD_PCMH"/>
    <property type="match status" value="1"/>
</dbReference>